<accession>Q7XTF8</accession>
<accession>C7J1B6</accession>
<keyword id="KW-0186">Copper</keyword>
<keyword id="KW-0187">Copper transport</keyword>
<keyword id="KW-0406">Ion transport</keyword>
<keyword id="KW-0472">Membrane</keyword>
<keyword id="KW-1185">Reference proteome</keyword>
<keyword id="KW-0812">Transmembrane</keyword>
<keyword id="KW-1133">Transmembrane helix</keyword>
<keyword id="KW-0813">Transport</keyword>
<organism>
    <name type="scientific">Oryza sativa subsp. japonica</name>
    <name type="common">Rice</name>
    <dbReference type="NCBI Taxonomy" id="39947"/>
    <lineage>
        <taxon>Eukaryota</taxon>
        <taxon>Viridiplantae</taxon>
        <taxon>Streptophyta</taxon>
        <taxon>Embryophyta</taxon>
        <taxon>Tracheophyta</taxon>
        <taxon>Spermatophyta</taxon>
        <taxon>Magnoliopsida</taxon>
        <taxon>Liliopsida</taxon>
        <taxon>Poales</taxon>
        <taxon>Poaceae</taxon>
        <taxon>BOP clade</taxon>
        <taxon>Oryzoideae</taxon>
        <taxon>Oryzeae</taxon>
        <taxon>Oryzinae</taxon>
        <taxon>Oryza</taxon>
        <taxon>Oryza sativa</taxon>
    </lineage>
</organism>
<reference key="1">
    <citation type="journal article" date="2002" name="Nature">
        <title>Sequence and analysis of rice chromosome 4.</title>
        <authorList>
            <person name="Feng Q."/>
            <person name="Zhang Y."/>
            <person name="Hao P."/>
            <person name="Wang S."/>
            <person name="Fu G."/>
            <person name="Huang Y."/>
            <person name="Li Y."/>
            <person name="Zhu J."/>
            <person name="Liu Y."/>
            <person name="Hu X."/>
            <person name="Jia P."/>
            <person name="Zhang Y."/>
            <person name="Zhao Q."/>
            <person name="Ying K."/>
            <person name="Yu S."/>
            <person name="Tang Y."/>
            <person name="Weng Q."/>
            <person name="Zhang L."/>
            <person name="Lu Y."/>
            <person name="Mu J."/>
            <person name="Lu Y."/>
            <person name="Zhang L.S."/>
            <person name="Yu Z."/>
            <person name="Fan D."/>
            <person name="Liu X."/>
            <person name="Lu T."/>
            <person name="Li C."/>
            <person name="Wu Y."/>
            <person name="Sun T."/>
            <person name="Lei H."/>
            <person name="Li T."/>
            <person name="Hu H."/>
            <person name="Guan J."/>
            <person name="Wu M."/>
            <person name="Zhang R."/>
            <person name="Zhou B."/>
            <person name="Chen Z."/>
            <person name="Chen L."/>
            <person name="Jin Z."/>
            <person name="Wang R."/>
            <person name="Yin H."/>
            <person name="Cai Z."/>
            <person name="Ren S."/>
            <person name="Lv G."/>
            <person name="Gu W."/>
            <person name="Zhu G."/>
            <person name="Tu Y."/>
            <person name="Jia J."/>
            <person name="Zhang Y."/>
            <person name="Chen J."/>
            <person name="Kang H."/>
            <person name="Chen X."/>
            <person name="Shao C."/>
            <person name="Sun Y."/>
            <person name="Hu Q."/>
            <person name="Zhang X."/>
            <person name="Zhang W."/>
            <person name="Wang L."/>
            <person name="Ding C."/>
            <person name="Sheng H."/>
            <person name="Gu J."/>
            <person name="Chen S."/>
            <person name="Ni L."/>
            <person name="Zhu F."/>
            <person name="Chen W."/>
            <person name="Lan L."/>
            <person name="Lai Y."/>
            <person name="Cheng Z."/>
            <person name="Gu M."/>
            <person name="Jiang J."/>
            <person name="Li J."/>
            <person name="Hong G."/>
            <person name="Xue Y."/>
            <person name="Han B."/>
        </authorList>
    </citation>
    <scope>NUCLEOTIDE SEQUENCE [LARGE SCALE GENOMIC DNA]</scope>
    <source>
        <strain>cv. Nipponbare</strain>
    </source>
</reference>
<reference key="2">
    <citation type="journal article" date="2005" name="Nature">
        <title>The map-based sequence of the rice genome.</title>
        <authorList>
            <consortium name="International rice genome sequencing project (IRGSP)"/>
        </authorList>
    </citation>
    <scope>NUCLEOTIDE SEQUENCE [LARGE SCALE GENOMIC DNA]</scope>
    <source>
        <strain>cv. Nipponbare</strain>
    </source>
</reference>
<reference key="3">
    <citation type="journal article" date="2008" name="Nucleic Acids Res.">
        <title>The rice annotation project database (RAP-DB): 2008 update.</title>
        <authorList>
            <consortium name="The rice annotation project (RAP)"/>
        </authorList>
    </citation>
    <scope>GENOME REANNOTATION</scope>
    <source>
        <strain>cv. Nipponbare</strain>
    </source>
</reference>
<reference key="4">
    <citation type="journal article" date="2013" name="Rice">
        <title>Improvement of the Oryza sativa Nipponbare reference genome using next generation sequence and optical map data.</title>
        <authorList>
            <person name="Kawahara Y."/>
            <person name="de la Bastide M."/>
            <person name="Hamilton J.P."/>
            <person name="Kanamori H."/>
            <person name="McCombie W.R."/>
            <person name="Ouyang S."/>
            <person name="Schwartz D.C."/>
            <person name="Tanaka T."/>
            <person name="Wu J."/>
            <person name="Zhou S."/>
            <person name="Childs K.L."/>
            <person name="Davidson R.M."/>
            <person name="Lin H."/>
            <person name="Quesada-Ocampo L."/>
            <person name="Vaillancourt B."/>
            <person name="Sakai H."/>
            <person name="Lee S.S."/>
            <person name="Kim J."/>
            <person name="Numa H."/>
            <person name="Itoh T."/>
            <person name="Buell C.R."/>
            <person name="Matsumoto T."/>
        </authorList>
    </citation>
    <scope>GENOME REANNOTATION</scope>
    <source>
        <strain>cv. Nipponbare</strain>
    </source>
</reference>
<evidence type="ECO:0000250" key="1"/>
<evidence type="ECO:0000255" key="2"/>
<evidence type="ECO:0000256" key="3">
    <source>
        <dbReference type="SAM" id="MobiDB-lite"/>
    </source>
</evidence>
<evidence type="ECO:0000305" key="4"/>
<feature type="chain" id="PRO_0000400004" description="Copper transporter 6">
    <location>
        <begin position="1"/>
        <end position="184"/>
    </location>
</feature>
<feature type="transmembrane region" description="Helical" evidence="2">
    <location>
        <begin position="64"/>
        <end position="84"/>
    </location>
</feature>
<feature type="transmembrane region" description="Helical" evidence="2">
    <location>
        <begin position="124"/>
        <end position="144"/>
    </location>
</feature>
<feature type="region of interest" description="Disordered" evidence="3">
    <location>
        <begin position="1"/>
        <end position="27"/>
    </location>
</feature>
<feature type="compositionally biased region" description="Low complexity" evidence="3">
    <location>
        <begin position="1"/>
        <end position="25"/>
    </location>
</feature>
<proteinExistence type="evidence at transcript level"/>
<protein>
    <recommendedName>
        <fullName>Copper transporter 6</fullName>
        <shortName>OsCOPT6</shortName>
    </recommendedName>
</protein>
<sequence length="184" mass="18729">MRGMGDDGMGPMAMAPPRSGHATAAAPPPPQHKMAMMMHMTFFWSDRAVVLIRGWPGERGAGMYALCLLFVLALAALTEGLSVLSRRLARRGGGAASSDGGRPAPAPASSAALLTAVHAARMGMAYLVMLAVMSFNVGVLLAAVAGHALGFLLARSRVRPAARDGGGGVACEHGGLPPADGSKT</sequence>
<name>COPT6_ORYSJ</name>
<dbReference type="EMBL" id="AL606453">
    <property type="protein sequence ID" value="CAE01520.1"/>
    <property type="molecule type" value="Genomic_DNA"/>
</dbReference>
<dbReference type="EMBL" id="AP008210">
    <property type="protein sequence ID" value="BAH92657.1"/>
    <property type="status" value="ALT_SEQ"/>
    <property type="molecule type" value="Genomic_DNA"/>
</dbReference>
<dbReference type="EMBL" id="AP014960">
    <property type="protein sequence ID" value="BAS89153.1"/>
    <property type="molecule type" value="Genomic_DNA"/>
</dbReference>
<dbReference type="RefSeq" id="XP_015634588.1">
    <property type="nucleotide sequence ID" value="XM_015779102.1"/>
</dbReference>
<dbReference type="FunCoup" id="Q7XTF8">
    <property type="interactions" value="66"/>
</dbReference>
<dbReference type="STRING" id="39947.Q7XTF8"/>
<dbReference type="PaxDb" id="39947-Q7XTF8"/>
<dbReference type="EnsemblPlants" id="Os04t0415600-00">
    <property type="protein sequence ID" value="Os04t0415600-00"/>
    <property type="gene ID" value="Os04g0415600"/>
</dbReference>
<dbReference type="Gramene" id="Os04t0415600-00">
    <property type="protein sequence ID" value="Os04t0415600-00"/>
    <property type="gene ID" value="Os04g0415600"/>
</dbReference>
<dbReference type="KEGG" id="dosa:Os04g0415600"/>
<dbReference type="eggNOG" id="KOG3386">
    <property type="taxonomic scope" value="Eukaryota"/>
</dbReference>
<dbReference type="HOGENOM" id="CLU_079690_1_0_1"/>
<dbReference type="InParanoid" id="Q7XTF8"/>
<dbReference type="OMA" id="PHMMMMH"/>
<dbReference type="OrthoDB" id="73901at2759"/>
<dbReference type="Proteomes" id="UP000000763">
    <property type="component" value="Chromosome 4"/>
</dbReference>
<dbReference type="Proteomes" id="UP000059680">
    <property type="component" value="Chromosome 4"/>
</dbReference>
<dbReference type="ExpressionAtlas" id="Q7XTF8">
    <property type="expression patterns" value="baseline and differential"/>
</dbReference>
<dbReference type="GO" id="GO:0005886">
    <property type="term" value="C:plasma membrane"/>
    <property type="evidence" value="ECO:0000318"/>
    <property type="project" value="GO_Central"/>
</dbReference>
<dbReference type="GO" id="GO:0005375">
    <property type="term" value="F:copper ion transmembrane transporter activity"/>
    <property type="evidence" value="ECO:0000318"/>
    <property type="project" value="GO_Central"/>
</dbReference>
<dbReference type="InterPro" id="IPR007274">
    <property type="entry name" value="Cop_transporter"/>
</dbReference>
<dbReference type="PANTHER" id="PTHR12483:SF42">
    <property type="entry name" value="COPPER TRANSPORTER 4"/>
    <property type="match status" value="1"/>
</dbReference>
<dbReference type="PANTHER" id="PTHR12483">
    <property type="entry name" value="SOLUTE CARRIER FAMILY 31 COPPER TRANSPORTERS"/>
    <property type="match status" value="1"/>
</dbReference>
<dbReference type="Pfam" id="PF04145">
    <property type="entry name" value="Ctr"/>
    <property type="match status" value="1"/>
</dbReference>
<gene>
    <name type="primary">COPT6</name>
    <name type="ordered locus">Os04g0415600</name>
    <name type="ordered locus">LOC_Os04g33900</name>
    <name type="ORF">OJ991214_12.9</name>
</gene>
<comment type="function">
    <text evidence="1">Involved in the transport of copper.</text>
</comment>
<comment type="subcellular location">
    <subcellularLocation>
        <location evidence="4">Membrane</location>
        <topology evidence="4">Multi-pass membrane protein</topology>
    </subcellularLocation>
</comment>
<comment type="similarity">
    <text evidence="4">Belongs to the copper transporter (Ctr) (TC 1.A.56) family. SLC31A subfamily.</text>
</comment>
<comment type="sequence caution" evidence="4">
    <conflict type="erroneous gene model prediction">
        <sequence resource="EMBL-CDS" id="BAH92657"/>
    </conflict>
</comment>